<proteinExistence type="inferred from homology"/>
<protein>
    <recommendedName>
        <fullName evidence="1">Thiazole synthase</fullName>
        <ecNumber evidence="1">2.8.1.10</ecNumber>
    </recommendedName>
</protein>
<keyword id="KW-0963">Cytoplasm</keyword>
<keyword id="KW-1185">Reference proteome</keyword>
<keyword id="KW-0704">Schiff base</keyword>
<keyword id="KW-0784">Thiamine biosynthesis</keyword>
<keyword id="KW-0808">Transferase</keyword>
<sequence length="263" mass="27817">MKKVPLVIGGKTLSSRFFIGTGRYPNPVVQNETIKASGAEVLTFAIRRINLEHPDEDAILQHLEGRTFQYLPNTSGANNAEEAIRIARLARAAGLSDWIKVEISVSEKTLLPDPVETLKATEALAKEGFTVLPYTSDDPILCKKLEEVGAAAVMPGASPIGTGLGILNPYNLGVIVEEASVPIIVDAGLGSASDVAKAMELGADGVLMNTAVAKAKDPVKMALAMKQAIEAGLLSYEAGRIPMKRYATASSQLDHLLSSHSKG</sequence>
<evidence type="ECO:0000255" key="1">
    <source>
        <dbReference type="HAMAP-Rule" id="MF_00443"/>
    </source>
</evidence>
<organism>
    <name type="scientific">Shouchella clausii (strain KSM-K16)</name>
    <name type="common">Alkalihalobacillus clausii</name>
    <dbReference type="NCBI Taxonomy" id="66692"/>
    <lineage>
        <taxon>Bacteria</taxon>
        <taxon>Bacillati</taxon>
        <taxon>Bacillota</taxon>
        <taxon>Bacilli</taxon>
        <taxon>Bacillales</taxon>
        <taxon>Bacillaceae</taxon>
        <taxon>Shouchella</taxon>
    </lineage>
</organism>
<dbReference type="EC" id="2.8.1.10" evidence="1"/>
<dbReference type="EMBL" id="AP006627">
    <property type="protein sequence ID" value="BAD64270.1"/>
    <property type="molecule type" value="Genomic_DNA"/>
</dbReference>
<dbReference type="RefSeq" id="WP_011246578.1">
    <property type="nucleotide sequence ID" value="NC_006582.1"/>
</dbReference>
<dbReference type="SMR" id="Q5WH85"/>
<dbReference type="STRING" id="66692.ABC1735"/>
<dbReference type="KEGG" id="bcl:ABC1735"/>
<dbReference type="eggNOG" id="COG2022">
    <property type="taxonomic scope" value="Bacteria"/>
</dbReference>
<dbReference type="HOGENOM" id="CLU_062233_1_0_9"/>
<dbReference type="OrthoDB" id="9805935at2"/>
<dbReference type="UniPathway" id="UPA00060"/>
<dbReference type="Proteomes" id="UP000001168">
    <property type="component" value="Chromosome"/>
</dbReference>
<dbReference type="GO" id="GO:0005737">
    <property type="term" value="C:cytoplasm"/>
    <property type="evidence" value="ECO:0007669"/>
    <property type="project" value="UniProtKB-SubCell"/>
</dbReference>
<dbReference type="GO" id="GO:1990107">
    <property type="term" value="F:thiazole synthase activity"/>
    <property type="evidence" value="ECO:0007669"/>
    <property type="project" value="UniProtKB-EC"/>
</dbReference>
<dbReference type="GO" id="GO:0009229">
    <property type="term" value="P:thiamine diphosphate biosynthetic process"/>
    <property type="evidence" value="ECO:0007669"/>
    <property type="project" value="UniProtKB-UniRule"/>
</dbReference>
<dbReference type="CDD" id="cd04728">
    <property type="entry name" value="ThiG"/>
    <property type="match status" value="1"/>
</dbReference>
<dbReference type="Gene3D" id="3.20.20.70">
    <property type="entry name" value="Aldolase class I"/>
    <property type="match status" value="1"/>
</dbReference>
<dbReference type="HAMAP" id="MF_00443">
    <property type="entry name" value="ThiG"/>
    <property type="match status" value="1"/>
</dbReference>
<dbReference type="InterPro" id="IPR013785">
    <property type="entry name" value="Aldolase_TIM"/>
</dbReference>
<dbReference type="InterPro" id="IPR033983">
    <property type="entry name" value="Thiazole_synthase_ThiG"/>
</dbReference>
<dbReference type="InterPro" id="IPR008867">
    <property type="entry name" value="ThiG"/>
</dbReference>
<dbReference type="PANTHER" id="PTHR34266">
    <property type="entry name" value="THIAZOLE SYNTHASE"/>
    <property type="match status" value="1"/>
</dbReference>
<dbReference type="PANTHER" id="PTHR34266:SF2">
    <property type="entry name" value="THIAZOLE SYNTHASE"/>
    <property type="match status" value="1"/>
</dbReference>
<dbReference type="Pfam" id="PF05690">
    <property type="entry name" value="ThiG"/>
    <property type="match status" value="1"/>
</dbReference>
<dbReference type="SUPFAM" id="SSF110399">
    <property type="entry name" value="ThiG-like"/>
    <property type="match status" value="1"/>
</dbReference>
<reference key="1">
    <citation type="submission" date="2003-10" db="EMBL/GenBank/DDBJ databases">
        <title>The complete genome sequence of the alkaliphilic Bacillus clausii KSM-K16.</title>
        <authorList>
            <person name="Takaki Y."/>
            <person name="Kageyama Y."/>
            <person name="Shimamura S."/>
            <person name="Suzuki H."/>
            <person name="Nishi S."/>
            <person name="Hatada Y."/>
            <person name="Kawai S."/>
            <person name="Ito S."/>
            <person name="Horikoshi K."/>
        </authorList>
    </citation>
    <scope>NUCLEOTIDE SEQUENCE [LARGE SCALE GENOMIC DNA]</scope>
    <source>
        <strain>KSM-K16</strain>
    </source>
</reference>
<accession>Q5WH85</accession>
<name>THIG_SHOC1</name>
<feature type="chain" id="PRO_0000162787" description="Thiazole synthase">
    <location>
        <begin position="1"/>
        <end position="263"/>
    </location>
</feature>
<feature type="active site" description="Schiff-base intermediate with DXP" evidence="1">
    <location>
        <position position="100"/>
    </location>
</feature>
<feature type="binding site" evidence="1">
    <location>
        <position position="161"/>
    </location>
    <ligand>
        <name>1-deoxy-D-xylulose 5-phosphate</name>
        <dbReference type="ChEBI" id="CHEBI:57792"/>
    </ligand>
</feature>
<feature type="binding site" evidence="1">
    <location>
        <begin position="187"/>
        <end position="188"/>
    </location>
    <ligand>
        <name>1-deoxy-D-xylulose 5-phosphate</name>
        <dbReference type="ChEBI" id="CHEBI:57792"/>
    </ligand>
</feature>
<feature type="binding site" evidence="1">
    <location>
        <begin position="209"/>
        <end position="210"/>
    </location>
    <ligand>
        <name>1-deoxy-D-xylulose 5-phosphate</name>
        <dbReference type="ChEBI" id="CHEBI:57792"/>
    </ligand>
</feature>
<comment type="function">
    <text evidence="1">Catalyzes the rearrangement of 1-deoxy-D-xylulose 5-phosphate (DXP) to produce the thiazole phosphate moiety of thiamine. Sulfur is provided by the thiocarboxylate moiety of the carrier protein ThiS. In vitro, sulfur can be provided by H(2)S.</text>
</comment>
<comment type="catalytic activity">
    <reaction evidence="1">
        <text>[ThiS sulfur-carrier protein]-C-terminal-Gly-aminoethanethioate + 2-iminoacetate + 1-deoxy-D-xylulose 5-phosphate = [ThiS sulfur-carrier protein]-C-terminal Gly-Gly + 2-[(2R,5Z)-2-carboxy-4-methylthiazol-5(2H)-ylidene]ethyl phosphate + 2 H2O + H(+)</text>
        <dbReference type="Rhea" id="RHEA:26297"/>
        <dbReference type="Rhea" id="RHEA-COMP:12909"/>
        <dbReference type="Rhea" id="RHEA-COMP:19908"/>
        <dbReference type="ChEBI" id="CHEBI:15377"/>
        <dbReference type="ChEBI" id="CHEBI:15378"/>
        <dbReference type="ChEBI" id="CHEBI:57792"/>
        <dbReference type="ChEBI" id="CHEBI:62899"/>
        <dbReference type="ChEBI" id="CHEBI:77846"/>
        <dbReference type="ChEBI" id="CHEBI:90778"/>
        <dbReference type="ChEBI" id="CHEBI:232372"/>
        <dbReference type="EC" id="2.8.1.10"/>
    </reaction>
</comment>
<comment type="pathway">
    <text evidence="1">Cofactor biosynthesis; thiamine diphosphate biosynthesis.</text>
</comment>
<comment type="subunit">
    <text evidence="1">Homotetramer. Forms heterodimers with either ThiH or ThiS.</text>
</comment>
<comment type="subcellular location">
    <subcellularLocation>
        <location evidence="1">Cytoplasm</location>
    </subcellularLocation>
</comment>
<comment type="similarity">
    <text evidence="1">Belongs to the ThiG family.</text>
</comment>
<gene>
    <name evidence="1" type="primary">thiG</name>
    <name type="ordered locus">ABC1735</name>
</gene>